<feature type="chain" id="PRO_0000416877" description="TATA box-binding protein-associated factor RNA polymerase I subunit B">
    <location>
        <begin position="1"/>
        <end position="666"/>
    </location>
</feature>
<feature type="zinc finger region" description="RRN7-type">
    <location>
        <begin position="1"/>
        <end position="29"/>
    </location>
</feature>
<feature type="region of interest" description="B-reader" evidence="1">
    <location>
        <begin position="30"/>
        <end position="64"/>
    </location>
</feature>
<feature type="region of interest" description="Disordered" evidence="3">
    <location>
        <begin position="45"/>
        <end position="110"/>
    </location>
</feature>
<feature type="region of interest" description="B-linker" evidence="1">
    <location>
        <begin position="65"/>
        <end position="80"/>
    </location>
</feature>
<feature type="region of interest" description="N-terminal cyclin fold" evidence="1">
    <location>
        <begin position="81"/>
        <end position="285"/>
    </location>
</feature>
<feature type="region of interest" description="Disordered" evidence="3">
    <location>
        <begin position="189"/>
        <end position="208"/>
    </location>
</feature>
<feature type="region of interest" description="C-terminal cyclin fold" evidence="1">
    <location>
        <begin position="286"/>
        <end position="288"/>
    </location>
</feature>
<feature type="region of interest" description="Disordered" evidence="3">
    <location>
        <begin position="515"/>
        <end position="548"/>
    </location>
</feature>
<feature type="compositionally biased region" description="Polar residues" evidence="3">
    <location>
        <begin position="78"/>
        <end position="89"/>
    </location>
</feature>
<feature type="compositionally biased region" description="Basic and acidic residues" evidence="3">
    <location>
        <begin position="90"/>
        <end position="110"/>
    </location>
</feature>
<feature type="compositionally biased region" description="Basic and acidic residues" evidence="3">
    <location>
        <begin position="189"/>
        <end position="202"/>
    </location>
</feature>
<feature type="compositionally biased region" description="Basic and acidic residues" evidence="3">
    <location>
        <begin position="539"/>
        <end position="548"/>
    </location>
</feature>
<feature type="binding site" evidence="1">
    <location>
        <position position="3"/>
    </location>
    <ligand>
        <name>Zn(2+)</name>
        <dbReference type="ChEBI" id="CHEBI:29105"/>
    </ligand>
</feature>
<feature type="binding site" evidence="1">
    <location>
        <position position="6"/>
    </location>
    <ligand>
        <name>Zn(2+)</name>
        <dbReference type="ChEBI" id="CHEBI:29105"/>
    </ligand>
</feature>
<feature type="binding site" evidence="1">
    <location>
        <position position="21"/>
    </location>
    <ligand>
        <name>Zn(2+)</name>
        <dbReference type="ChEBI" id="CHEBI:29105"/>
    </ligand>
</feature>
<feature type="binding site" evidence="1">
    <location>
        <position position="24"/>
    </location>
    <ligand>
        <name>Zn(2+)</name>
        <dbReference type="ChEBI" id="CHEBI:29105"/>
    </ligand>
</feature>
<feature type="splice variant" id="VSP_042977" description="In isoform 3." evidence="8">
    <location>
        <begin position="1"/>
        <end position="140"/>
    </location>
</feature>
<feature type="splice variant" id="VSP_042978" description="In isoform 2." evidence="8">
    <original>VSIM</original>
    <variation>LQTI</variation>
    <location>
        <begin position="290"/>
        <end position="293"/>
    </location>
</feature>
<feature type="splice variant" id="VSP_042979" description="In isoform 2." evidence="8">
    <location>
        <begin position="294"/>
        <end position="666"/>
    </location>
</feature>
<accession>Q5XVF0</accession>
<accession>Q5XVE8</accession>
<accession>Q5XVE9</accession>
<protein>
    <recommendedName>
        <fullName>TATA box-binding protein-associated factor RNA polymerase I subunit B</fullName>
    </recommendedName>
    <alternativeName>
        <fullName>Central cell guidance protein</fullName>
    </alternativeName>
    <alternativeName>
        <fullName>Protein MATERNAL EFFECT EMBRYO ARREST 12</fullName>
    </alternativeName>
    <alternativeName>
        <fullName>TATA box-binding protein-associated factor 1B</fullName>
        <shortName>TBP-associated factor 1B</shortName>
    </alternativeName>
</protein>
<reference key="1">
    <citation type="journal article" date="1999" name="Nature">
        <title>Sequence and analysis of chromosome 2 of the plant Arabidopsis thaliana.</title>
        <authorList>
            <person name="Lin X."/>
            <person name="Kaul S."/>
            <person name="Rounsley S.D."/>
            <person name="Shea T.P."/>
            <person name="Benito M.-I."/>
            <person name="Town C.D."/>
            <person name="Fujii C.Y."/>
            <person name="Mason T.M."/>
            <person name="Bowman C.L."/>
            <person name="Barnstead M.E."/>
            <person name="Feldblyum T.V."/>
            <person name="Buell C.R."/>
            <person name="Ketchum K.A."/>
            <person name="Lee J.J."/>
            <person name="Ronning C.M."/>
            <person name="Koo H.L."/>
            <person name="Moffat K.S."/>
            <person name="Cronin L.A."/>
            <person name="Shen M."/>
            <person name="Pai G."/>
            <person name="Van Aken S."/>
            <person name="Umayam L."/>
            <person name="Tallon L.J."/>
            <person name="Gill J.E."/>
            <person name="Adams M.D."/>
            <person name="Carrera A.J."/>
            <person name="Creasy T.H."/>
            <person name="Goodman H.M."/>
            <person name="Somerville C.R."/>
            <person name="Copenhaver G.P."/>
            <person name="Preuss D."/>
            <person name="Nierman W.C."/>
            <person name="White O."/>
            <person name="Eisen J.A."/>
            <person name="Salzberg S.L."/>
            <person name="Fraser C.M."/>
            <person name="Venter J.C."/>
        </authorList>
    </citation>
    <scope>NUCLEOTIDE SEQUENCE [LARGE SCALE GENOMIC DNA]</scope>
    <source>
        <strain>cv. Columbia</strain>
    </source>
</reference>
<reference key="2">
    <citation type="journal article" date="2017" name="Plant J.">
        <title>Araport11: a complete reannotation of the Arabidopsis thaliana reference genome.</title>
        <authorList>
            <person name="Cheng C.Y."/>
            <person name="Krishnakumar V."/>
            <person name="Chan A.P."/>
            <person name="Thibaud-Nissen F."/>
            <person name="Schobel S."/>
            <person name="Town C.D."/>
        </authorList>
    </citation>
    <scope>GENOME REANNOTATION</scope>
    <source>
        <strain>cv. Columbia</strain>
    </source>
</reference>
<reference key="3">
    <citation type="submission" date="2004-08" db="EMBL/GenBank/DDBJ databases">
        <authorList>
            <person name="Underwood B.A."/>
            <person name="Xiao Y.-L."/>
            <person name="Moskal W.A. Jr."/>
            <person name="Monaghan E.L."/>
            <person name="Wang W."/>
            <person name="Redman J.C."/>
            <person name="Wu H.C."/>
            <person name="Utterback T."/>
            <person name="Town C.D."/>
        </authorList>
    </citation>
    <scope>NUCLEOTIDE SEQUENCE [LARGE SCALE MRNA] (ISOFORMS 1; 2 AND 3)</scope>
    <source>
        <strain>cv. Columbia</strain>
    </source>
</reference>
<reference key="4">
    <citation type="journal article" date="2005" name="Development">
        <title>Genetic and molecular identification of genes required for female gametophyte development and function in Arabidopsis.</title>
        <authorList>
            <person name="Pagnussat G.C."/>
            <person name="Yu H.-J."/>
            <person name="Ngo Q.A."/>
            <person name="Rajani S."/>
            <person name="Mayalagu S."/>
            <person name="Johnson C.S."/>
            <person name="Capron A."/>
            <person name="Xie L.-F."/>
            <person name="Ye D."/>
            <person name="Sundaresan V."/>
        </authorList>
    </citation>
    <scope>FUNCTION</scope>
</reference>
<reference key="5">
    <citation type="journal article" date="2007" name="Plant Cell">
        <title>The central cell plays a critical role in pollen tube guidance in Arabidopsis.</title>
        <authorList>
            <person name="Chen Y.H."/>
            <person name="Li H.J."/>
            <person name="Shi D.Q."/>
            <person name="Yuan L."/>
            <person name="Liu J."/>
            <person name="Sreenivasan R."/>
            <person name="Baskar R."/>
            <person name="Grossniklaus U."/>
            <person name="Yang W.C."/>
        </authorList>
    </citation>
    <scope>FUNCTION</scope>
    <scope>TISSUE SPECIFICITY</scope>
    <scope>SUBCELLULAR LOCATION</scope>
    <scope>INTERACTION WITH TFIIF</scope>
    <scope>DEVELOPMENTAL STAGE</scope>
    <scope>DISRUPTION PHENOTYPE</scope>
</reference>
<reference key="6">
    <citation type="journal article" date="2015" name="Plant Cell">
        <title>Arabidopsis CBP1 is a novel regulator of transcription initiation in central cell-mediated pollen tube guidance.</title>
        <authorList>
            <person name="Li H.J."/>
            <person name="Zhu S.S."/>
            <person name="Zhang M.X."/>
            <person name="Wang T."/>
            <person name="Liang L."/>
            <person name="Xue Y."/>
            <person name="Shi D.Q."/>
            <person name="Liu J."/>
            <person name="Yang W.C."/>
        </authorList>
    </citation>
    <scope>FUNCTION</scope>
    <scope>INTERACTION WITH MEE14/CBP1; TBP1; TFIIF AND NRPB1</scope>
</reference>
<evidence type="ECO:0000250" key="1"/>
<evidence type="ECO:0000250" key="2">
    <source>
        <dbReference type="UniProtKB" id="P40992"/>
    </source>
</evidence>
<evidence type="ECO:0000256" key="3">
    <source>
        <dbReference type="SAM" id="MobiDB-lite"/>
    </source>
</evidence>
<evidence type="ECO:0000269" key="4">
    <source>
    </source>
</evidence>
<evidence type="ECO:0000269" key="5">
    <source>
    </source>
</evidence>
<evidence type="ECO:0000269" key="6">
    <source>
    </source>
</evidence>
<evidence type="ECO:0000303" key="7">
    <source>
    </source>
</evidence>
<evidence type="ECO:0000303" key="8">
    <source ref="3"/>
</evidence>
<evidence type="ECO:0000305" key="9"/>
<proteinExistence type="evidence at protein level"/>
<keyword id="KW-0025">Alternative splicing</keyword>
<keyword id="KW-0238">DNA-binding</keyword>
<keyword id="KW-0479">Metal-binding</keyword>
<keyword id="KW-0539">Nucleus</keyword>
<keyword id="KW-1185">Reference proteome</keyword>
<keyword id="KW-0804">Transcription</keyword>
<keyword id="KW-0805">Transcription regulation</keyword>
<keyword id="KW-0862">Zinc</keyword>
<keyword id="KW-0863">Zinc-finger</keyword>
<name>MEE12_ARATH</name>
<comment type="function">
    <text evidence="2 4 5 6">Component of RNA polymerase I core factor complex that acts as a GTF2B/TFIIB-like factor and plays a key role in multiple steps during transcription initiation such as pre-initiation complex (PIC) assembly and postpolymerase recruitment events in polymerase I (Pol I) transcription. Binds rDNA promoters and plays a role in Pol I recruitment (By similarity). Required for the development of the one-cell zygote and endosperm in embryos (PubMed:15634699). Required for micropylar pollen tube guidance, but has no effect on ovule development and gametophytic cell fate specification (PubMed:18055609). May regulate the transcription of secreted cysteine-rich peptide (CRP) genes in the embryo sac (PubMed:26462908).</text>
</comment>
<comment type="subunit">
    <text evidence="5 6">Interacts with TFIIF (PubMed:18055609, PubMed:26462908). Interacts with MEE14/CBP1, TBP1 and NRPB1 (via CTD) (PubMed:26462908).</text>
</comment>
<comment type="subcellular location">
    <subcellularLocation>
        <location evidence="1">Nucleus</location>
        <location evidence="1">Nucleolus</location>
    </subcellularLocation>
    <subcellularLocation>
        <location evidence="5">Nucleus</location>
    </subcellularLocation>
</comment>
<comment type="alternative products">
    <event type="alternative splicing"/>
    <isoform>
        <id>Q5XVF0-1</id>
        <name>1</name>
        <sequence type="displayed"/>
    </isoform>
    <isoform>
        <id>Q5XVF0-2</id>
        <name>2</name>
        <sequence type="described" ref="VSP_042978 VSP_042979"/>
    </isoform>
    <isoform>
        <id>Q5XVF0-3</id>
        <name>3</name>
        <sequence type="described" ref="VSP_042977"/>
    </isoform>
</comment>
<comment type="tissue specificity">
    <text evidence="5">Expressed at high levels in seedlings, inflorescences and young siliques and at lower levels in roots. Not detected in leaves and stems. Detected in root tips and shoot apical meristems, in anthers, primarily in microspores with weaker expression in mature pollen grains and in the central cell of the mature female gametophyte. Not expressed in synergids, egg cells, antipodal cells, endosperm cells and fertilized egg cells.</text>
</comment>
<comment type="developmental stage">
    <text evidence="5">Expression in central cell of the mature female gametophyte is pollination independent.</text>
</comment>
<comment type="domain">
    <text evidence="1">Although it shares weak sequence similarity with GTF2B/TFIIB, displays a similar subdomain organization as GTF2B/TFIIB, with a N-terminal zinc finger, a connecting region (composed of B-reader and B-linker regions), followed by 2 cyclin folds.</text>
</comment>
<comment type="disruption phenotype">
    <text evidence="5">Disrupted function of the female gametophyte. Defective in micropylar pollen tube guidance leading to zygotic lethality.</text>
</comment>
<comment type="miscellaneous">
    <text>Expression of MEE12 in the central cell alone is sufficient to restore the normal pollen tube guidance phenotype.</text>
</comment>
<comment type="similarity">
    <text evidence="9">Belongs to the RRN7/TAF1B family.</text>
</comment>
<organism>
    <name type="scientific">Arabidopsis thaliana</name>
    <name type="common">Mouse-ear cress</name>
    <dbReference type="NCBI Taxonomy" id="3702"/>
    <lineage>
        <taxon>Eukaryota</taxon>
        <taxon>Viridiplantae</taxon>
        <taxon>Streptophyta</taxon>
        <taxon>Embryophyta</taxon>
        <taxon>Tracheophyta</taxon>
        <taxon>Spermatophyta</taxon>
        <taxon>Magnoliopsida</taxon>
        <taxon>eudicotyledons</taxon>
        <taxon>Gunneridae</taxon>
        <taxon>Pentapetalae</taxon>
        <taxon>rosids</taxon>
        <taxon>malvids</taxon>
        <taxon>Brassicales</taxon>
        <taxon>Brassicaceae</taxon>
        <taxon>Camelineae</taxon>
        <taxon>Arabidopsis</taxon>
    </lineage>
</organism>
<dbReference type="EMBL" id="AC004138">
    <property type="status" value="NOT_ANNOTATED_CDS"/>
    <property type="molecule type" value="Genomic_DNA"/>
</dbReference>
<dbReference type="EMBL" id="CP002685">
    <property type="protein sequence ID" value="AEC05644.1"/>
    <property type="molecule type" value="Genomic_DNA"/>
</dbReference>
<dbReference type="EMBL" id="AY735572">
    <property type="protein sequence ID" value="AAU44442.1"/>
    <property type="molecule type" value="mRNA"/>
</dbReference>
<dbReference type="EMBL" id="AY735573">
    <property type="protein sequence ID" value="AAU44443.1"/>
    <property type="molecule type" value="mRNA"/>
</dbReference>
<dbReference type="EMBL" id="AY735574">
    <property type="protein sequence ID" value="AAU44444.1"/>
    <property type="molecule type" value="mRNA"/>
</dbReference>
<dbReference type="RefSeq" id="NP_671769.1">
    <molecule id="Q5XVF0-1"/>
    <property type="nucleotide sequence ID" value="NM_147236.3"/>
</dbReference>
<dbReference type="FunCoup" id="Q5XVF0">
    <property type="interactions" value="255"/>
</dbReference>
<dbReference type="STRING" id="3702.Q5XVF0"/>
<dbReference type="GlyGen" id="Q5XVF0">
    <property type="glycosylation" value="1 site"/>
</dbReference>
<dbReference type="PaxDb" id="3702-AT2G02955.1"/>
<dbReference type="ProteomicsDB" id="250637">
    <molecule id="Q5XVF0-1"/>
</dbReference>
<dbReference type="EnsemblPlants" id="AT2G02955.1">
    <molecule id="Q5XVF0-1"/>
    <property type="protein sequence ID" value="AT2G02955.1"/>
    <property type="gene ID" value="AT2G02955"/>
</dbReference>
<dbReference type="GeneID" id="814824"/>
<dbReference type="Gramene" id="AT2G02955.1">
    <molecule id="Q5XVF0-1"/>
    <property type="protein sequence ID" value="AT2G02955.1"/>
    <property type="gene ID" value="AT2G02955"/>
</dbReference>
<dbReference type="KEGG" id="ath:AT2G02955"/>
<dbReference type="Araport" id="AT2G02955"/>
<dbReference type="TAIR" id="AT2G02955">
    <property type="gene designation" value="MEE12"/>
</dbReference>
<dbReference type="eggNOG" id="KOG1988">
    <property type="taxonomic scope" value="Eukaryota"/>
</dbReference>
<dbReference type="HOGENOM" id="CLU_011285_1_0_1"/>
<dbReference type="InParanoid" id="Q5XVF0"/>
<dbReference type="OMA" id="FGQRAVM"/>
<dbReference type="PhylomeDB" id="Q5XVF0"/>
<dbReference type="PRO" id="PR:Q5XVF0"/>
<dbReference type="Proteomes" id="UP000006548">
    <property type="component" value="Chromosome 2"/>
</dbReference>
<dbReference type="ExpressionAtlas" id="Q5XVF0">
    <property type="expression patterns" value="baseline and differential"/>
</dbReference>
<dbReference type="GO" id="GO:0070860">
    <property type="term" value="C:RNA polymerase I core factor complex"/>
    <property type="evidence" value="ECO:0007669"/>
    <property type="project" value="InterPro"/>
</dbReference>
<dbReference type="GO" id="GO:0001164">
    <property type="term" value="F:RNA polymerase I core promoter sequence-specific DNA binding"/>
    <property type="evidence" value="ECO:0000250"/>
    <property type="project" value="UniProtKB"/>
</dbReference>
<dbReference type="GO" id="GO:0008270">
    <property type="term" value="F:zinc ion binding"/>
    <property type="evidence" value="ECO:0007669"/>
    <property type="project" value="UniProtKB-KW"/>
</dbReference>
<dbReference type="GO" id="GO:0009793">
    <property type="term" value="P:embryo development ending in seed dormancy"/>
    <property type="evidence" value="ECO:0000315"/>
    <property type="project" value="TAIR"/>
</dbReference>
<dbReference type="GO" id="GO:0001188">
    <property type="term" value="P:RNA polymerase I preinitiation complex assembly"/>
    <property type="evidence" value="ECO:0000250"/>
    <property type="project" value="UniProtKB"/>
</dbReference>
<dbReference type="InterPro" id="IPR048540">
    <property type="entry name" value="Rrn7_cyclin_N"/>
</dbReference>
<dbReference type="InterPro" id="IPR033599">
    <property type="entry name" value="TAF1B/Rrn7"/>
</dbReference>
<dbReference type="InterPro" id="IPR021752">
    <property type="entry name" value="TF_Rrn7_Zf"/>
</dbReference>
<dbReference type="PANTHER" id="PTHR31576">
    <property type="entry name" value="TATA BOX-BINDING PROTEIN-ASSOCIATED FACTOR RNA POLYMERASE I SUBUNIT B"/>
    <property type="match status" value="1"/>
</dbReference>
<dbReference type="PANTHER" id="PTHR31576:SF2">
    <property type="entry name" value="TATA BOX-BINDING PROTEIN-ASSOCIATED FACTOR RNA POLYMERASE I SUBUNIT B"/>
    <property type="match status" value="1"/>
</dbReference>
<dbReference type="Pfam" id="PF20644">
    <property type="entry name" value="Rrn7_cyclin_N"/>
    <property type="match status" value="1"/>
</dbReference>
<dbReference type="Pfam" id="PF11781">
    <property type="entry name" value="Zn_ribbon_RRN7"/>
    <property type="match status" value="1"/>
</dbReference>
<sequence>MICTECENDAFDEEDDGYYYCQRCGVQVENLIQTGVDDGDLIGEGGGTQGALYNPKHRRTEPQPITPSQPRFTDDTSRYSQFKSQFESENGNKELPREVKRAPDSYVDKEPTEPVDFAAETLSYENYYDEARDRYVKAFLMMITYQCDALVDKFNVTPLIIGLVGPISLRYVALSGVYHKDWANNAIRDSEHQSEDGEVKDAKRLKRHKAEPRNIDGKRAVTIWFGILKKTMPLSSSLVISFLACHQAGAPVLPTDIVRWAREGKLPYLSCFLDIREQMGERSAACPVKVSIMARPFQVISAQMLEARASVIADTIGLPLPPVNFYGIASNYIKQLSIPEDKILDLARLIQNWSLPPELYLSTNEQKLPSRVCVMSILIVAIRMLYNINGLGVWERSLGFVNASDGDSETNSGTAEKATEFDTQELLKNLEAKYHEVAAETLESEKDLVSYLSLGKNEFFAGLEEDSPDDTYRIVDNLWNGYPKDEDIECLPKRGRDWDDDVSLNQLSLYDSRFSDGNNPCSSSSRRNESVSIGLDLSSSEHRESSSPEKLKEIAIKRLITDMGDDLFCYIPPRVKVKRLDYLQYVRKKEDGALIYAAHADYYILLRVCAKVAEIDVRNMHRGVLSFERRLAWIEKRIDQVLHLTRPLMTCKHCCDDGNIGEDQDD</sequence>
<gene>
    <name evidence="7" type="primary">MEE12</name>
    <name type="synonym">CCG</name>
    <name type="ordered locus">At2g02955</name>
    <name type="ORF">T17M13</name>
</gene>